<keyword id="KW-0067">ATP-binding</keyword>
<keyword id="KW-0963">Cytoplasm</keyword>
<keyword id="KW-0324">Glycolysis</keyword>
<keyword id="KW-0418">Kinase</keyword>
<keyword id="KW-0547">Nucleotide-binding</keyword>
<keyword id="KW-0808">Transferase</keyword>
<protein>
    <recommendedName>
        <fullName evidence="1">Phosphoglycerate kinase</fullName>
        <ecNumber evidence="1">2.7.2.3</ecNumber>
    </recommendedName>
</protein>
<sequence>MAKKIVSDLDLKGKTVLVRADFNVPLKDGEITNDNRIVQALPTIQYIIEQGGKIVLFSHLGKVKEESDKAKLTLRPVAEDLSKKLDKEVVFVPETRGEKLEAAIKDLKEGDVLLVENTRYEDLDGKKESKNDPELGKYWASLGDVFVNDAFGTAHREHASNVGISTHLETAAGFLMDKEIKFIGGVVNDPHKPVVAILGGAKVSDKINVIKNLVNIADKIIIGGGMAYTFLKAQGKEIGISLLEEDKIDFAKDLLEKHGDKIVLPVDTKVAKEFSNDAKITVVPSDSIPADQEGMDIGPNTVKLFADELEGAHTVVWNGPMGVFEFSNFAQGTIGVCKAIANLKDAITIIGGGDSAAAAISLGFENDFTHISTGGGASLEYLEGKELPGIKAINNK</sequence>
<evidence type="ECO:0000255" key="1">
    <source>
        <dbReference type="HAMAP-Rule" id="MF_00145"/>
    </source>
</evidence>
<name>PGK_STAA2</name>
<reference key="1">
    <citation type="submission" date="2007-06" db="EMBL/GenBank/DDBJ databases">
        <title>Complete sequence of chromosome of Staphylococcus aureus subsp. aureus JH1.</title>
        <authorList>
            <consortium name="US DOE Joint Genome Institute"/>
            <person name="Copeland A."/>
            <person name="Lucas S."/>
            <person name="Lapidus A."/>
            <person name="Barry K."/>
            <person name="Detter J.C."/>
            <person name="Glavina del Rio T."/>
            <person name="Hammon N."/>
            <person name="Israni S."/>
            <person name="Dalin E."/>
            <person name="Tice H."/>
            <person name="Pitluck S."/>
            <person name="Chain P."/>
            <person name="Malfatti S."/>
            <person name="Shin M."/>
            <person name="Vergez L."/>
            <person name="Schmutz J."/>
            <person name="Larimer F."/>
            <person name="Land M."/>
            <person name="Hauser L."/>
            <person name="Kyrpides N."/>
            <person name="Ivanova N."/>
            <person name="Tomasz A."/>
            <person name="Richardson P."/>
        </authorList>
    </citation>
    <scope>NUCLEOTIDE SEQUENCE [LARGE SCALE GENOMIC DNA]</scope>
    <source>
        <strain>JH1</strain>
    </source>
</reference>
<dbReference type="EC" id="2.7.2.3" evidence="1"/>
<dbReference type="EMBL" id="CP000736">
    <property type="protein sequence ID" value="ABR51670.1"/>
    <property type="molecule type" value="Genomic_DNA"/>
</dbReference>
<dbReference type="SMR" id="A6TZQ2"/>
<dbReference type="KEGG" id="sah:SaurJH1_0814"/>
<dbReference type="HOGENOM" id="CLU_025427_0_2_9"/>
<dbReference type="UniPathway" id="UPA00109">
    <property type="reaction ID" value="UER00185"/>
</dbReference>
<dbReference type="GO" id="GO:0005829">
    <property type="term" value="C:cytosol"/>
    <property type="evidence" value="ECO:0007669"/>
    <property type="project" value="TreeGrafter"/>
</dbReference>
<dbReference type="GO" id="GO:0043531">
    <property type="term" value="F:ADP binding"/>
    <property type="evidence" value="ECO:0007669"/>
    <property type="project" value="TreeGrafter"/>
</dbReference>
<dbReference type="GO" id="GO:0005524">
    <property type="term" value="F:ATP binding"/>
    <property type="evidence" value="ECO:0007669"/>
    <property type="project" value="UniProtKB-KW"/>
</dbReference>
<dbReference type="GO" id="GO:0004618">
    <property type="term" value="F:phosphoglycerate kinase activity"/>
    <property type="evidence" value="ECO:0007669"/>
    <property type="project" value="UniProtKB-UniRule"/>
</dbReference>
<dbReference type="GO" id="GO:0006094">
    <property type="term" value="P:gluconeogenesis"/>
    <property type="evidence" value="ECO:0007669"/>
    <property type="project" value="TreeGrafter"/>
</dbReference>
<dbReference type="GO" id="GO:0006096">
    <property type="term" value="P:glycolytic process"/>
    <property type="evidence" value="ECO:0007669"/>
    <property type="project" value="UniProtKB-UniRule"/>
</dbReference>
<dbReference type="CDD" id="cd00318">
    <property type="entry name" value="Phosphoglycerate_kinase"/>
    <property type="match status" value="1"/>
</dbReference>
<dbReference type="FunFam" id="3.40.50.1260:FF:000001">
    <property type="entry name" value="Phosphoglycerate kinase"/>
    <property type="match status" value="1"/>
</dbReference>
<dbReference type="FunFam" id="3.40.50.1260:FF:000008">
    <property type="entry name" value="Phosphoglycerate kinase"/>
    <property type="match status" value="1"/>
</dbReference>
<dbReference type="Gene3D" id="3.40.50.1260">
    <property type="entry name" value="Phosphoglycerate kinase, N-terminal domain"/>
    <property type="match status" value="2"/>
</dbReference>
<dbReference type="HAMAP" id="MF_00145">
    <property type="entry name" value="Phosphoglyc_kinase"/>
    <property type="match status" value="1"/>
</dbReference>
<dbReference type="InterPro" id="IPR001576">
    <property type="entry name" value="Phosphoglycerate_kinase"/>
</dbReference>
<dbReference type="InterPro" id="IPR015911">
    <property type="entry name" value="Phosphoglycerate_kinase_CS"/>
</dbReference>
<dbReference type="InterPro" id="IPR015824">
    <property type="entry name" value="Phosphoglycerate_kinase_N"/>
</dbReference>
<dbReference type="InterPro" id="IPR036043">
    <property type="entry name" value="Phosphoglycerate_kinase_sf"/>
</dbReference>
<dbReference type="PANTHER" id="PTHR11406">
    <property type="entry name" value="PHOSPHOGLYCERATE KINASE"/>
    <property type="match status" value="1"/>
</dbReference>
<dbReference type="PANTHER" id="PTHR11406:SF23">
    <property type="entry name" value="PHOSPHOGLYCERATE KINASE 1, CHLOROPLASTIC-RELATED"/>
    <property type="match status" value="1"/>
</dbReference>
<dbReference type="Pfam" id="PF00162">
    <property type="entry name" value="PGK"/>
    <property type="match status" value="1"/>
</dbReference>
<dbReference type="PIRSF" id="PIRSF000724">
    <property type="entry name" value="Pgk"/>
    <property type="match status" value="1"/>
</dbReference>
<dbReference type="PRINTS" id="PR00477">
    <property type="entry name" value="PHGLYCKINASE"/>
</dbReference>
<dbReference type="SUPFAM" id="SSF53748">
    <property type="entry name" value="Phosphoglycerate kinase"/>
    <property type="match status" value="1"/>
</dbReference>
<dbReference type="PROSITE" id="PS00111">
    <property type="entry name" value="PGLYCERATE_KINASE"/>
    <property type="match status" value="1"/>
</dbReference>
<gene>
    <name evidence="1" type="primary">pgk</name>
    <name type="ordered locus">SaurJH1_0814</name>
</gene>
<organism>
    <name type="scientific">Staphylococcus aureus (strain JH1)</name>
    <dbReference type="NCBI Taxonomy" id="359787"/>
    <lineage>
        <taxon>Bacteria</taxon>
        <taxon>Bacillati</taxon>
        <taxon>Bacillota</taxon>
        <taxon>Bacilli</taxon>
        <taxon>Bacillales</taxon>
        <taxon>Staphylococcaceae</taxon>
        <taxon>Staphylococcus</taxon>
    </lineage>
</organism>
<feature type="chain" id="PRO_1000076610" description="Phosphoglycerate kinase">
    <location>
        <begin position="1"/>
        <end position="396"/>
    </location>
</feature>
<feature type="binding site" evidence="1">
    <location>
        <begin position="21"/>
        <end position="23"/>
    </location>
    <ligand>
        <name>substrate</name>
    </ligand>
</feature>
<feature type="binding site" evidence="1">
    <location>
        <position position="36"/>
    </location>
    <ligand>
        <name>substrate</name>
    </ligand>
</feature>
<feature type="binding site" evidence="1">
    <location>
        <begin position="59"/>
        <end position="62"/>
    </location>
    <ligand>
        <name>substrate</name>
    </ligand>
</feature>
<feature type="binding site" evidence="1">
    <location>
        <position position="119"/>
    </location>
    <ligand>
        <name>substrate</name>
    </ligand>
</feature>
<feature type="binding site" evidence="1">
    <location>
        <position position="156"/>
    </location>
    <ligand>
        <name>substrate</name>
    </ligand>
</feature>
<feature type="binding site" evidence="1">
    <location>
        <position position="206"/>
    </location>
    <ligand>
        <name>ATP</name>
        <dbReference type="ChEBI" id="CHEBI:30616"/>
    </ligand>
</feature>
<feature type="binding site" evidence="1">
    <location>
        <position position="294"/>
    </location>
    <ligand>
        <name>ATP</name>
        <dbReference type="ChEBI" id="CHEBI:30616"/>
    </ligand>
</feature>
<feature type="binding site" evidence="1">
    <location>
        <position position="325"/>
    </location>
    <ligand>
        <name>ATP</name>
        <dbReference type="ChEBI" id="CHEBI:30616"/>
    </ligand>
</feature>
<feature type="binding site" evidence="1">
    <location>
        <begin position="352"/>
        <end position="355"/>
    </location>
    <ligand>
        <name>ATP</name>
        <dbReference type="ChEBI" id="CHEBI:30616"/>
    </ligand>
</feature>
<proteinExistence type="inferred from homology"/>
<accession>A6TZQ2</accession>
<comment type="catalytic activity">
    <reaction evidence="1">
        <text>(2R)-3-phosphoglycerate + ATP = (2R)-3-phospho-glyceroyl phosphate + ADP</text>
        <dbReference type="Rhea" id="RHEA:14801"/>
        <dbReference type="ChEBI" id="CHEBI:30616"/>
        <dbReference type="ChEBI" id="CHEBI:57604"/>
        <dbReference type="ChEBI" id="CHEBI:58272"/>
        <dbReference type="ChEBI" id="CHEBI:456216"/>
        <dbReference type="EC" id="2.7.2.3"/>
    </reaction>
</comment>
<comment type="pathway">
    <text evidence="1">Carbohydrate degradation; glycolysis; pyruvate from D-glyceraldehyde 3-phosphate: step 2/5.</text>
</comment>
<comment type="subunit">
    <text evidence="1">Monomer.</text>
</comment>
<comment type="subcellular location">
    <subcellularLocation>
        <location evidence="1">Cytoplasm</location>
    </subcellularLocation>
</comment>
<comment type="similarity">
    <text evidence="1">Belongs to the phosphoglycerate kinase family.</text>
</comment>